<sequence>MLRTHAAGSLRPADAGQTVTLAGWVARRRDHGGVIFIDLRDASGVSQVVFREGDVLAAAHRLRAEFCVAVTGVVEVRPEGNENPEIPTGQIEVNATELTVLGESAPLPFQLDEQAGEEARLKYRYLDLRREGPGNALRLRSKVNAAARSVLAEHDFVEIETPTLTRSTPEGARDFLVPARLQPGSFYALPQSPQLFKQLLMVAGMERYYQIARCYRDEDFRADRQPEFTQLDMEMSFVEADDVIAISEQVLKAVWATIGYDLPLPLPRISYEEAMRRFGSDKPDLRFGIELVECTEYFKDTTFRVFQAPYVGAVVMPGGASQPRRTLDGWQEFAKQRGHKGLAYVLVGEDGTLGGPVAKNLSDAERDGLVAHVGANPGDCIFFAAGPAKGARALLGATRIEIAKRLDLIDPNAWAFTWVVDFPMFEAADEATAAGDVAVGSGAWTAMHHAFTAPKPDSVDTFDSDPGNALSDAYDIVCNGNEIGGGSIRIHRRDIQERVFAMMGIDHDEAQEKFGFLLDAFSYGAPPHGGIAFGWDRITALLAGVDSIREVIAFPKSGGGVDPLTDAPAPITPQQRKESGIDAKPREDKPKEDAKSKA</sequence>
<feature type="chain" id="PRO_1000006711" description="Aspartate--tRNA(Asp/Asn) ligase">
    <location>
        <begin position="1"/>
        <end position="598"/>
    </location>
</feature>
<feature type="region of interest" description="Aspartate" evidence="1">
    <location>
        <begin position="194"/>
        <end position="197"/>
    </location>
</feature>
<feature type="region of interest" description="Disordered" evidence="2">
    <location>
        <begin position="558"/>
        <end position="598"/>
    </location>
</feature>
<feature type="compositionally biased region" description="Basic and acidic residues" evidence="2">
    <location>
        <begin position="575"/>
        <end position="598"/>
    </location>
</feature>
<feature type="binding site" evidence="1">
    <location>
        <position position="170"/>
    </location>
    <ligand>
        <name>L-aspartate</name>
        <dbReference type="ChEBI" id="CHEBI:29991"/>
    </ligand>
</feature>
<feature type="binding site" evidence="1">
    <location>
        <begin position="216"/>
        <end position="218"/>
    </location>
    <ligand>
        <name>ATP</name>
        <dbReference type="ChEBI" id="CHEBI:30616"/>
    </ligand>
</feature>
<feature type="binding site" evidence="1">
    <location>
        <position position="216"/>
    </location>
    <ligand>
        <name>L-aspartate</name>
        <dbReference type="ChEBI" id="CHEBI:29991"/>
    </ligand>
</feature>
<feature type="binding site" evidence="1">
    <location>
        <position position="225"/>
    </location>
    <ligand>
        <name>ATP</name>
        <dbReference type="ChEBI" id="CHEBI:30616"/>
    </ligand>
</feature>
<feature type="binding site" evidence="1">
    <location>
        <position position="448"/>
    </location>
    <ligand>
        <name>L-aspartate</name>
        <dbReference type="ChEBI" id="CHEBI:29991"/>
    </ligand>
</feature>
<feature type="binding site" evidence="1">
    <location>
        <position position="482"/>
    </location>
    <ligand>
        <name>ATP</name>
        <dbReference type="ChEBI" id="CHEBI:30616"/>
    </ligand>
</feature>
<feature type="binding site" evidence="1">
    <location>
        <position position="489"/>
    </location>
    <ligand>
        <name>L-aspartate</name>
        <dbReference type="ChEBI" id="CHEBI:29991"/>
    </ligand>
</feature>
<feature type="binding site" evidence="1">
    <location>
        <begin position="534"/>
        <end position="537"/>
    </location>
    <ligand>
        <name>ATP</name>
        <dbReference type="ChEBI" id="CHEBI:30616"/>
    </ligand>
</feature>
<feature type="site" description="Important for tRNA non-discrimination" evidence="1">
    <location>
        <position position="31"/>
    </location>
</feature>
<feature type="site" description="Important for tRNA non-discrimination" evidence="1">
    <location>
        <position position="80"/>
    </location>
</feature>
<feature type="helix" evidence="4">
    <location>
        <begin position="7"/>
        <end position="9"/>
    </location>
</feature>
<feature type="helix" evidence="4">
    <location>
        <begin position="12"/>
        <end position="14"/>
    </location>
</feature>
<feature type="strand" evidence="4">
    <location>
        <begin position="18"/>
        <end position="31"/>
    </location>
</feature>
<feature type="strand" evidence="4">
    <location>
        <begin position="34"/>
        <end position="41"/>
    </location>
</feature>
<feature type="strand" evidence="4">
    <location>
        <begin position="44"/>
        <end position="50"/>
    </location>
</feature>
<feature type="helix" evidence="4">
    <location>
        <begin position="53"/>
        <end position="59"/>
    </location>
</feature>
<feature type="strand" evidence="4">
    <location>
        <begin position="67"/>
        <end position="76"/>
    </location>
</feature>
<feature type="turn" evidence="3">
    <location>
        <begin position="79"/>
        <end position="81"/>
    </location>
</feature>
<feature type="turn" evidence="4">
    <location>
        <begin position="87"/>
        <end position="90"/>
    </location>
</feature>
<feature type="strand" evidence="4">
    <location>
        <begin position="91"/>
        <end position="102"/>
    </location>
</feature>
<feature type="helix" evidence="4">
    <location>
        <begin position="117"/>
        <end position="122"/>
    </location>
</feature>
<feature type="helix" evidence="4">
    <location>
        <begin position="124"/>
        <end position="127"/>
    </location>
</feature>
<feature type="helix" evidence="4">
    <location>
        <begin position="131"/>
        <end position="153"/>
    </location>
</feature>
<feature type="strand" evidence="4">
    <location>
        <begin position="163"/>
        <end position="165"/>
    </location>
</feature>
<feature type="strand" evidence="3">
    <location>
        <begin position="170"/>
        <end position="173"/>
    </location>
</feature>
<feature type="strand" evidence="4">
    <location>
        <begin position="176"/>
        <end position="178"/>
    </location>
</feature>
<feature type="strand" evidence="4">
    <location>
        <begin position="186"/>
        <end position="188"/>
    </location>
</feature>
<feature type="helix" evidence="4">
    <location>
        <begin position="194"/>
        <end position="202"/>
    </location>
</feature>
<feature type="strand" evidence="4">
    <location>
        <begin position="207"/>
        <end position="215"/>
    </location>
</feature>
<feature type="strand" evidence="4">
    <location>
        <begin position="226"/>
        <end position="237"/>
    </location>
</feature>
<feature type="helix" evidence="4">
    <location>
        <begin position="240"/>
        <end position="256"/>
    </location>
</feature>
<feature type="turn" evidence="4">
    <location>
        <begin position="257"/>
        <end position="259"/>
    </location>
</feature>
<feature type="strand" evidence="4">
    <location>
        <begin position="268"/>
        <end position="270"/>
    </location>
</feature>
<feature type="helix" evidence="4">
    <location>
        <begin position="271"/>
        <end position="278"/>
    </location>
</feature>
<feature type="turn" evidence="4">
    <location>
        <begin position="295"/>
        <end position="300"/>
    </location>
</feature>
<feature type="helix" evidence="4">
    <location>
        <begin position="304"/>
        <end position="306"/>
    </location>
</feature>
<feature type="strand" evidence="4">
    <location>
        <begin position="311"/>
        <end position="316"/>
    </location>
</feature>
<feature type="helix" evidence="4">
    <location>
        <begin position="319"/>
        <end position="321"/>
    </location>
</feature>
<feature type="helix" evidence="4">
    <location>
        <begin position="324"/>
        <end position="335"/>
    </location>
</feature>
<feature type="turn" evidence="4">
    <location>
        <begin position="336"/>
        <end position="338"/>
    </location>
</feature>
<feature type="strand" evidence="4">
    <location>
        <begin position="343"/>
        <end position="347"/>
    </location>
</feature>
<feature type="strand" evidence="4">
    <location>
        <begin position="353"/>
        <end position="355"/>
    </location>
</feature>
<feature type="helix" evidence="4">
    <location>
        <begin position="358"/>
        <end position="360"/>
    </location>
</feature>
<feature type="helix" evidence="4">
    <location>
        <begin position="363"/>
        <end position="367"/>
    </location>
</feature>
<feature type="helix" evidence="4">
    <location>
        <begin position="369"/>
        <end position="373"/>
    </location>
</feature>
<feature type="strand" evidence="4">
    <location>
        <begin position="380"/>
        <end position="387"/>
    </location>
</feature>
<feature type="helix" evidence="4">
    <location>
        <begin position="388"/>
        <end position="406"/>
    </location>
</feature>
<feature type="strand" evidence="4">
    <location>
        <begin position="416"/>
        <end position="420"/>
    </location>
</feature>
<feature type="strand" evidence="4">
    <location>
        <begin position="423"/>
        <end position="429"/>
    </location>
</feature>
<feature type="strand" evidence="4">
    <location>
        <begin position="435"/>
        <end position="437"/>
    </location>
</feature>
<feature type="strand" evidence="4">
    <location>
        <begin position="444"/>
        <end position="448"/>
    </location>
</feature>
<feature type="helix" evidence="4">
    <location>
        <begin position="456"/>
        <end position="458"/>
    </location>
</feature>
<feature type="turn" evidence="4">
    <location>
        <begin position="459"/>
        <end position="464"/>
    </location>
</feature>
<feature type="helix" evidence="4">
    <location>
        <begin position="466"/>
        <end position="468"/>
    </location>
</feature>
<feature type="strand" evidence="4">
    <location>
        <begin position="470"/>
        <end position="478"/>
    </location>
</feature>
<feature type="strand" evidence="4">
    <location>
        <begin position="481"/>
        <end position="489"/>
    </location>
</feature>
<feature type="helix" evidence="4">
    <location>
        <begin position="493"/>
        <end position="502"/>
    </location>
</feature>
<feature type="helix" evidence="4">
    <location>
        <begin position="507"/>
        <end position="520"/>
    </location>
</feature>
<feature type="strand" evidence="4">
    <location>
        <begin position="528"/>
        <end position="534"/>
    </location>
</feature>
<feature type="helix" evidence="4">
    <location>
        <begin position="535"/>
        <end position="543"/>
    </location>
</feature>
<feature type="helix" evidence="4">
    <location>
        <begin position="548"/>
        <end position="551"/>
    </location>
</feature>
<feature type="strand" evidence="4">
    <location>
        <begin position="552"/>
        <end position="554"/>
    </location>
</feature>
<feature type="turn" evidence="4">
    <location>
        <begin position="558"/>
        <end position="560"/>
    </location>
</feature>
<feature type="turn" evidence="4">
    <location>
        <begin position="563"/>
        <end position="566"/>
    </location>
</feature>
<feature type="helix" evidence="4">
    <location>
        <begin position="573"/>
        <end position="576"/>
    </location>
</feature>
<feature type="turn" evidence="4">
    <location>
        <begin position="577"/>
        <end position="579"/>
    </location>
</feature>
<organism>
    <name type="scientific">Mycolicibacterium smegmatis (strain ATCC 700084 / mc(2)155)</name>
    <name type="common">Mycobacterium smegmatis</name>
    <dbReference type="NCBI Taxonomy" id="246196"/>
    <lineage>
        <taxon>Bacteria</taxon>
        <taxon>Bacillati</taxon>
        <taxon>Actinomycetota</taxon>
        <taxon>Actinomycetes</taxon>
        <taxon>Mycobacteriales</taxon>
        <taxon>Mycobacteriaceae</taxon>
        <taxon>Mycolicibacterium</taxon>
    </lineage>
</organism>
<reference key="1">
    <citation type="submission" date="2006-10" db="EMBL/GenBank/DDBJ databases">
        <authorList>
            <person name="Fleischmann R.D."/>
            <person name="Dodson R.J."/>
            <person name="Haft D.H."/>
            <person name="Merkel J.S."/>
            <person name="Nelson W.C."/>
            <person name="Fraser C.M."/>
        </authorList>
    </citation>
    <scope>NUCLEOTIDE SEQUENCE [LARGE SCALE GENOMIC DNA]</scope>
    <source>
        <strain>ATCC 700084 / mc(2)155</strain>
    </source>
</reference>
<reference key="2">
    <citation type="journal article" date="2007" name="Genome Biol.">
        <title>Interrupted coding sequences in Mycobacterium smegmatis: authentic mutations or sequencing errors?</title>
        <authorList>
            <person name="Deshayes C."/>
            <person name="Perrodou E."/>
            <person name="Gallien S."/>
            <person name="Euphrasie D."/>
            <person name="Schaeffer C."/>
            <person name="Van-Dorsselaer A."/>
            <person name="Poch O."/>
            <person name="Lecompte O."/>
            <person name="Reyrat J.-M."/>
        </authorList>
    </citation>
    <scope>NUCLEOTIDE SEQUENCE [LARGE SCALE GENOMIC DNA]</scope>
    <source>
        <strain>ATCC 700084 / mc(2)155</strain>
    </source>
</reference>
<reference key="3">
    <citation type="journal article" date="2009" name="Genome Res.">
        <title>Ortho-proteogenomics: multiple proteomes investigation through orthology and a new MS-based protocol.</title>
        <authorList>
            <person name="Gallien S."/>
            <person name="Perrodou E."/>
            <person name="Carapito C."/>
            <person name="Deshayes C."/>
            <person name="Reyrat J.-M."/>
            <person name="Van Dorsselaer A."/>
            <person name="Poch O."/>
            <person name="Schaeffer C."/>
            <person name="Lecompte O."/>
        </authorList>
    </citation>
    <scope>NUCLEOTIDE SEQUENCE [LARGE SCALE GENOMIC DNA]</scope>
    <source>
        <strain>ATCC 700084 / mc(2)155</strain>
    </source>
</reference>
<evidence type="ECO:0000255" key="1">
    <source>
        <dbReference type="HAMAP-Rule" id="MF_00044"/>
    </source>
</evidence>
<evidence type="ECO:0000256" key="2">
    <source>
        <dbReference type="SAM" id="MobiDB-lite"/>
    </source>
</evidence>
<evidence type="ECO:0007829" key="3">
    <source>
        <dbReference type="PDB" id="4O2D"/>
    </source>
</evidence>
<evidence type="ECO:0007829" key="4">
    <source>
        <dbReference type="PDB" id="4RMF"/>
    </source>
</evidence>
<dbReference type="EC" id="6.1.1.23" evidence="1"/>
<dbReference type="EMBL" id="CP000480">
    <property type="protein sequence ID" value="ABK74097.1"/>
    <property type="molecule type" value="Genomic_DNA"/>
</dbReference>
<dbReference type="EMBL" id="CP001663">
    <property type="protein sequence ID" value="AFP39392.1"/>
    <property type="molecule type" value="Genomic_DNA"/>
</dbReference>
<dbReference type="RefSeq" id="WP_003894384.1">
    <property type="nucleotide sequence ID" value="NZ_SIJM01000002.1"/>
</dbReference>
<dbReference type="RefSeq" id="YP_887321.1">
    <property type="nucleotide sequence ID" value="NC_008596.1"/>
</dbReference>
<dbReference type="PDB" id="4O2D">
    <property type="method" value="X-ray"/>
    <property type="resolution" value="2.60 A"/>
    <property type="chains" value="A/B=2-598"/>
</dbReference>
<dbReference type="PDB" id="4RMF">
    <property type="method" value="X-ray"/>
    <property type="resolution" value="2.40 A"/>
    <property type="chains" value="A=1-598"/>
</dbReference>
<dbReference type="PDBsum" id="4O2D"/>
<dbReference type="PDBsum" id="4RMF"/>
<dbReference type="SMR" id="A0QWN3"/>
<dbReference type="STRING" id="246196.MSMEG_3003"/>
<dbReference type="PaxDb" id="246196-MSMEI_2928"/>
<dbReference type="GeneID" id="93457782"/>
<dbReference type="KEGG" id="msb:LJ00_14945"/>
<dbReference type="KEGG" id="msg:MSMEI_2928"/>
<dbReference type="KEGG" id="msm:MSMEG_3003"/>
<dbReference type="PATRIC" id="fig|246196.19.peg.2965"/>
<dbReference type="eggNOG" id="COG0173">
    <property type="taxonomic scope" value="Bacteria"/>
</dbReference>
<dbReference type="OrthoDB" id="9802326at2"/>
<dbReference type="EvolutionaryTrace" id="A0QWN3"/>
<dbReference type="Proteomes" id="UP000000757">
    <property type="component" value="Chromosome"/>
</dbReference>
<dbReference type="Proteomes" id="UP000006158">
    <property type="component" value="Chromosome"/>
</dbReference>
<dbReference type="GO" id="GO:0005737">
    <property type="term" value="C:cytoplasm"/>
    <property type="evidence" value="ECO:0007669"/>
    <property type="project" value="UniProtKB-SubCell"/>
</dbReference>
<dbReference type="GO" id="GO:0004815">
    <property type="term" value="F:aspartate-tRNA ligase activity"/>
    <property type="evidence" value="ECO:0007669"/>
    <property type="project" value="UniProtKB-UniRule"/>
</dbReference>
<dbReference type="GO" id="GO:0050560">
    <property type="term" value="F:aspartate-tRNA(Asn) ligase activity"/>
    <property type="evidence" value="ECO:0007669"/>
    <property type="project" value="UniProtKB-EC"/>
</dbReference>
<dbReference type="GO" id="GO:0005524">
    <property type="term" value="F:ATP binding"/>
    <property type="evidence" value="ECO:0007669"/>
    <property type="project" value="UniProtKB-UniRule"/>
</dbReference>
<dbReference type="GO" id="GO:0003676">
    <property type="term" value="F:nucleic acid binding"/>
    <property type="evidence" value="ECO:0007669"/>
    <property type="project" value="InterPro"/>
</dbReference>
<dbReference type="GO" id="GO:0006422">
    <property type="term" value="P:aspartyl-tRNA aminoacylation"/>
    <property type="evidence" value="ECO:0007669"/>
    <property type="project" value="UniProtKB-UniRule"/>
</dbReference>
<dbReference type="CDD" id="cd00777">
    <property type="entry name" value="AspRS_core"/>
    <property type="match status" value="1"/>
</dbReference>
<dbReference type="CDD" id="cd04317">
    <property type="entry name" value="EcAspRS_like_N"/>
    <property type="match status" value="1"/>
</dbReference>
<dbReference type="Gene3D" id="3.30.930.10">
    <property type="entry name" value="Bira Bifunctional Protein, Domain 2"/>
    <property type="match status" value="1"/>
</dbReference>
<dbReference type="Gene3D" id="3.30.1360.30">
    <property type="entry name" value="GAD-like domain"/>
    <property type="match status" value="1"/>
</dbReference>
<dbReference type="Gene3D" id="2.40.50.140">
    <property type="entry name" value="Nucleic acid-binding proteins"/>
    <property type="match status" value="1"/>
</dbReference>
<dbReference type="HAMAP" id="MF_00044">
    <property type="entry name" value="Asp_tRNA_synth_type1"/>
    <property type="match status" value="1"/>
</dbReference>
<dbReference type="InterPro" id="IPR004364">
    <property type="entry name" value="Aa-tRNA-synt_II"/>
</dbReference>
<dbReference type="InterPro" id="IPR006195">
    <property type="entry name" value="aa-tRNA-synth_II"/>
</dbReference>
<dbReference type="InterPro" id="IPR045864">
    <property type="entry name" value="aa-tRNA-synth_II/BPL/LPL"/>
</dbReference>
<dbReference type="InterPro" id="IPR004524">
    <property type="entry name" value="Asp-tRNA-ligase_1"/>
</dbReference>
<dbReference type="InterPro" id="IPR047089">
    <property type="entry name" value="Asp-tRNA-ligase_1_N"/>
</dbReference>
<dbReference type="InterPro" id="IPR002312">
    <property type="entry name" value="Asp/Asn-tRNA-synth_IIb"/>
</dbReference>
<dbReference type="InterPro" id="IPR047090">
    <property type="entry name" value="AspRS_core"/>
</dbReference>
<dbReference type="InterPro" id="IPR004115">
    <property type="entry name" value="GAD-like_sf"/>
</dbReference>
<dbReference type="InterPro" id="IPR029351">
    <property type="entry name" value="GAD_dom"/>
</dbReference>
<dbReference type="InterPro" id="IPR012340">
    <property type="entry name" value="NA-bd_OB-fold"/>
</dbReference>
<dbReference type="InterPro" id="IPR004365">
    <property type="entry name" value="NA-bd_OB_tRNA"/>
</dbReference>
<dbReference type="NCBIfam" id="TIGR00459">
    <property type="entry name" value="aspS_bact"/>
    <property type="match status" value="1"/>
</dbReference>
<dbReference type="NCBIfam" id="NF001750">
    <property type="entry name" value="PRK00476.1"/>
    <property type="match status" value="1"/>
</dbReference>
<dbReference type="PANTHER" id="PTHR22594:SF5">
    <property type="entry name" value="ASPARTATE--TRNA LIGASE, MITOCHONDRIAL"/>
    <property type="match status" value="1"/>
</dbReference>
<dbReference type="PANTHER" id="PTHR22594">
    <property type="entry name" value="ASPARTYL/LYSYL-TRNA SYNTHETASE"/>
    <property type="match status" value="1"/>
</dbReference>
<dbReference type="Pfam" id="PF02938">
    <property type="entry name" value="GAD"/>
    <property type="match status" value="1"/>
</dbReference>
<dbReference type="Pfam" id="PF00152">
    <property type="entry name" value="tRNA-synt_2"/>
    <property type="match status" value="1"/>
</dbReference>
<dbReference type="Pfam" id="PF01336">
    <property type="entry name" value="tRNA_anti-codon"/>
    <property type="match status" value="1"/>
</dbReference>
<dbReference type="PRINTS" id="PR01042">
    <property type="entry name" value="TRNASYNTHASP"/>
</dbReference>
<dbReference type="SUPFAM" id="SSF55681">
    <property type="entry name" value="Class II aaRS and biotin synthetases"/>
    <property type="match status" value="1"/>
</dbReference>
<dbReference type="SUPFAM" id="SSF55261">
    <property type="entry name" value="GAD domain-like"/>
    <property type="match status" value="1"/>
</dbReference>
<dbReference type="SUPFAM" id="SSF50249">
    <property type="entry name" value="Nucleic acid-binding proteins"/>
    <property type="match status" value="1"/>
</dbReference>
<dbReference type="PROSITE" id="PS50862">
    <property type="entry name" value="AA_TRNA_LIGASE_II"/>
    <property type="match status" value="1"/>
</dbReference>
<name>SYDND_MYCS2</name>
<accession>A0QWN3</accession>
<accession>I7G141</accession>
<comment type="function">
    <text evidence="1">Aspartyl-tRNA synthetase with relaxed tRNA specificity since it is able to aspartylate not only its cognate tRNA(Asp) but also tRNA(Asn). Reaction proceeds in two steps: L-aspartate is first activated by ATP to form Asp-AMP and then transferred to the acceptor end of tRNA(Asp/Asn).</text>
</comment>
<comment type="catalytic activity">
    <reaction evidence="1">
        <text>tRNA(Asx) + L-aspartate + ATP = L-aspartyl-tRNA(Asx) + AMP + diphosphate</text>
        <dbReference type="Rhea" id="RHEA:18349"/>
        <dbReference type="Rhea" id="RHEA-COMP:9710"/>
        <dbReference type="Rhea" id="RHEA-COMP:9711"/>
        <dbReference type="ChEBI" id="CHEBI:29991"/>
        <dbReference type="ChEBI" id="CHEBI:30616"/>
        <dbReference type="ChEBI" id="CHEBI:33019"/>
        <dbReference type="ChEBI" id="CHEBI:78442"/>
        <dbReference type="ChEBI" id="CHEBI:78516"/>
        <dbReference type="ChEBI" id="CHEBI:456215"/>
        <dbReference type="EC" id="6.1.1.23"/>
    </reaction>
</comment>
<comment type="subunit">
    <text evidence="1">Homodimer.</text>
</comment>
<comment type="subcellular location">
    <subcellularLocation>
        <location evidence="1">Cytoplasm</location>
    </subcellularLocation>
</comment>
<comment type="similarity">
    <text evidence="1">Belongs to the class-II aminoacyl-tRNA synthetase family. Type 1 subfamily.</text>
</comment>
<proteinExistence type="evidence at protein level"/>
<keyword id="KW-0002">3D-structure</keyword>
<keyword id="KW-0030">Aminoacyl-tRNA synthetase</keyword>
<keyword id="KW-0067">ATP-binding</keyword>
<keyword id="KW-0963">Cytoplasm</keyword>
<keyword id="KW-0436">Ligase</keyword>
<keyword id="KW-0547">Nucleotide-binding</keyword>
<keyword id="KW-0648">Protein biosynthesis</keyword>
<keyword id="KW-1185">Reference proteome</keyword>
<protein>
    <recommendedName>
        <fullName evidence="1">Aspartate--tRNA(Asp/Asn) ligase</fullName>
        <ecNumber evidence="1">6.1.1.23</ecNumber>
    </recommendedName>
    <alternativeName>
        <fullName evidence="1">Aspartyl-tRNA synthetase</fullName>
        <shortName evidence="1">AspRS</shortName>
    </alternativeName>
    <alternativeName>
        <fullName evidence="1">Non-discriminating aspartyl-tRNA synthetase</fullName>
        <shortName evidence="1">ND-AspRS</shortName>
    </alternativeName>
</protein>
<gene>
    <name evidence="1" type="primary">aspS</name>
    <name type="ordered locus">MSMEG_3003</name>
    <name type="ordered locus">MSMEI_2928</name>
</gene>